<dbReference type="EMBL" id="M16659">
    <property type="protein sequence ID" value="AAA40864.1"/>
    <property type="molecule type" value="mRNA"/>
</dbReference>
<dbReference type="EMBL" id="X13817">
    <property type="protein sequence ID" value="CAA32050.1"/>
    <property type="molecule type" value="mRNA"/>
</dbReference>
<dbReference type="EMBL" id="X14265">
    <property type="protein sequence ID" value="CAA32478.1"/>
    <property type="molecule type" value="Genomic_DNA"/>
</dbReference>
<dbReference type="EMBL" id="BC063187">
    <property type="protein sequence ID" value="AAH63187.1"/>
    <property type="molecule type" value="mRNA"/>
</dbReference>
<dbReference type="RefSeq" id="NP_036650.1">
    <property type="nucleotide sequence ID" value="NM_012518.3"/>
</dbReference>
<dbReference type="PDB" id="1UP5">
    <property type="method" value="X-ray"/>
    <property type="resolution" value="1.90 A"/>
    <property type="chains" value="A/B=2-149"/>
</dbReference>
<dbReference type="PDB" id="3EK4">
    <property type="method" value="X-ray"/>
    <property type="resolution" value="2.65 A"/>
    <property type="chains" value="A=45-149"/>
</dbReference>
<dbReference type="PDB" id="3EK7">
    <property type="method" value="X-ray"/>
    <property type="resolution" value="1.85 A"/>
    <property type="chains" value="A=45-149"/>
</dbReference>
<dbReference type="PDB" id="3EK8">
    <property type="method" value="X-ray"/>
    <property type="resolution" value="2.80 A"/>
    <property type="chains" value="A=45-149"/>
</dbReference>
<dbReference type="PDB" id="3EKH">
    <property type="method" value="X-ray"/>
    <property type="resolution" value="2.00 A"/>
    <property type="chains" value="A=45-149"/>
</dbReference>
<dbReference type="PDB" id="3EKJ">
    <property type="method" value="X-ray"/>
    <property type="resolution" value="2.80 A"/>
    <property type="chains" value="A=45-149"/>
</dbReference>
<dbReference type="PDB" id="3EVU">
    <property type="method" value="X-ray"/>
    <property type="resolution" value="1.75 A"/>
    <property type="chains" value="A=46-149"/>
</dbReference>
<dbReference type="PDB" id="3EVV">
    <property type="method" value="X-ray"/>
    <property type="resolution" value="2.60 A"/>
    <property type="chains" value="A=46-149"/>
</dbReference>
<dbReference type="PDB" id="3SG2">
    <property type="method" value="X-ray"/>
    <property type="resolution" value="2.00 A"/>
    <property type="chains" value="A=46-149"/>
</dbReference>
<dbReference type="PDB" id="3SG3">
    <property type="method" value="X-ray"/>
    <property type="resolution" value="2.10 A"/>
    <property type="chains" value="A=46-149"/>
</dbReference>
<dbReference type="PDB" id="3SG4">
    <property type="method" value="X-ray"/>
    <property type="resolution" value="2.40 A"/>
    <property type="chains" value="A=46-149"/>
</dbReference>
<dbReference type="PDB" id="3SG5">
    <property type="method" value="X-ray"/>
    <property type="resolution" value="1.90 A"/>
    <property type="chains" value="A=46-149"/>
</dbReference>
<dbReference type="PDB" id="3SG6">
    <property type="method" value="X-ray"/>
    <property type="resolution" value="1.70 A"/>
    <property type="chains" value="A=46-149"/>
</dbReference>
<dbReference type="PDB" id="3SG7">
    <property type="method" value="X-ray"/>
    <property type="resolution" value="1.90 A"/>
    <property type="chains" value="A=46-149"/>
</dbReference>
<dbReference type="PDB" id="3WLC">
    <property type="method" value="X-ray"/>
    <property type="resolution" value="2.49 A"/>
    <property type="chains" value="A=46-149"/>
</dbReference>
<dbReference type="PDB" id="3WLD">
    <property type="method" value="X-ray"/>
    <property type="resolution" value="2.70 A"/>
    <property type="chains" value="A=46-149"/>
</dbReference>
<dbReference type="PDB" id="4I2Y">
    <property type="method" value="X-ray"/>
    <property type="resolution" value="2.20 A"/>
    <property type="chains" value="A/B=20-149"/>
</dbReference>
<dbReference type="PDBsum" id="1UP5"/>
<dbReference type="PDBsum" id="3EK4"/>
<dbReference type="PDBsum" id="3EK7"/>
<dbReference type="PDBsum" id="3EK8"/>
<dbReference type="PDBsum" id="3EKH"/>
<dbReference type="PDBsum" id="3EKJ"/>
<dbReference type="PDBsum" id="3EVU"/>
<dbReference type="PDBsum" id="3EVV"/>
<dbReference type="PDBsum" id="3SG2"/>
<dbReference type="PDBsum" id="3SG3"/>
<dbReference type="PDBsum" id="3SG4"/>
<dbReference type="PDBsum" id="3SG5"/>
<dbReference type="PDBsum" id="3SG6"/>
<dbReference type="PDBsum" id="3SG7"/>
<dbReference type="PDBsum" id="3WLC"/>
<dbReference type="PDBsum" id="3WLD"/>
<dbReference type="PDBsum" id="4I2Y"/>
<dbReference type="SMR" id="P0DP31"/>
<dbReference type="FunCoup" id="P0DP31">
    <property type="interactions" value="4896"/>
</dbReference>
<dbReference type="iPTMnet" id="P0DP31"/>
<dbReference type="jPOST" id="P0DP31"/>
<dbReference type="Ensembl" id="ENSRNOT00000064679.3">
    <property type="protein sequence ID" value="ENSRNOP00000063822.1"/>
    <property type="gene ID" value="ENSRNOG00000004060.8"/>
</dbReference>
<dbReference type="GeneID" id="24244"/>
<dbReference type="KEGG" id="rno:24242"/>
<dbReference type="KEGG" id="rno:24244"/>
<dbReference type="KEGG" id="rno:50663"/>
<dbReference type="AGR" id="RGD:2257"/>
<dbReference type="AGR" id="RGD:2258"/>
<dbReference type="AGR" id="RGD:2259"/>
<dbReference type="CTD" id="801"/>
<dbReference type="CTD" id="805"/>
<dbReference type="CTD" id="808"/>
<dbReference type="RGD" id="2259">
    <property type="gene designation" value="Calm3"/>
</dbReference>
<dbReference type="VEuPathDB" id="HostDB:ENSRNOG00000016770"/>
<dbReference type="GeneTree" id="ENSGT00950000182980"/>
<dbReference type="InParanoid" id="P0DP31"/>
<dbReference type="OrthoDB" id="17077at9989"/>
<dbReference type="Reactome" id="R-RNO-111932">
    <property type="pathway name" value="CaMK IV-mediated phosphorylation of CREB"/>
</dbReference>
<dbReference type="Reactome" id="R-RNO-111933">
    <property type="pathway name" value="Calmodulin induced events"/>
</dbReference>
<dbReference type="Reactome" id="R-RNO-111957">
    <property type="pathway name" value="Cam-PDE 1 activation"/>
</dbReference>
<dbReference type="Reactome" id="R-RNO-114608">
    <property type="pathway name" value="Platelet degranulation"/>
</dbReference>
<dbReference type="Reactome" id="R-RNO-1474151">
    <property type="pathway name" value="Tetrahydrobiopterin (BH4) synthesis, recycling, salvage and regulation"/>
</dbReference>
<dbReference type="Reactome" id="R-RNO-163615">
    <property type="pathway name" value="PKA activation"/>
</dbReference>
<dbReference type="Reactome" id="R-RNO-1855204">
    <property type="pathway name" value="Synthesis of IP3 and IP4 in the cytosol"/>
</dbReference>
<dbReference type="Reactome" id="R-RNO-2025928">
    <property type="pathway name" value="Calcineurin activates NFAT"/>
</dbReference>
<dbReference type="Reactome" id="R-RNO-203615">
    <property type="pathway name" value="eNOS activation"/>
</dbReference>
<dbReference type="Reactome" id="R-RNO-2514859">
    <property type="pathway name" value="Inactivation, recovery and regulation of the phototransduction cascade"/>
</dbReference>
<dbReference type="Reactome" id="R-RNO-2672351">
    <property type="pathway name" value="Stimuli-sensing channels"/>
</dbReference>
<dbReference type="Reactome" id="R-RNO-2871809">
    <property type="pathway name" value="FCERI mediated Ca+2 mobilization"/>
</dbReference>
<dbReference type="Reactome" id="R-RNO-4086398">
    <property type="pathway name" value="Ca2+ pathway"/>
</dbReference>
<dbReference type="Reactome" id="R-RNO-418359">
    <property type="pathway name" value="Reduction of cytosolic Ca++ levels"/>
</dbReference>
<dbReference type="Reactome" id="R-RNO-425561">
    <property type="pathway name" value="Sodium/Calcium exchangers"/>
</dbReference>
<dbReference type="Reactome" id="R-RNO-438066">
    <property type="pathway name" value="Unblocking of NMDA receptors, glutamate binding and activation"/>
</dbReference>
<dbReference type="Reactome" id="R-RNO-442729">
    <property type="pathway name" value="CREB1 phosphorylation through the activation of CaMKII/CaMKK/CaMKIV cascasde"/>
</dbReference>
<dbReference type="Reactome" id="R-RNO-445355">
    <property type="pathway name" value="Smooth Muscle Contraction"/>
</dbReference>
<dbReference type="Reactome" id="R-RNO-451308">
    <property type="pathway name" value="Activation of Ca-permeable Kainate Receptor"/>
</dbReference>
<dbReference type="Reactome" id="R-RNO-5218920">
    <property type="pathway name" value="VEGFR2 mediated vascular permeability"/>
</dbReference>
<dbReference type="Reactome" id="R-RNO-5578775">
    <property type="pathway name" value="Ion homeostasis"/>
</dbReference>
<dbReference type="Reactome" id="R-RNO-5607763">
    <property type="pathway name" value="CLEC7A (Dectin-1) induces NFAT activation"/>
</dbReference>
<dbReference type="Reactome" id="R-RNO-5626467">
    <property type="pathway name" value="RHO GTPases activate IQGAPs"/>
</dbReference>
<dbReference type="Reactome" id="R-RNO-5627123">
    <property type="pathway name" value="RHO GTPases activate PAKs"/>
</dbReference>
<dbReference type="Reactome" id="R-RNO-5673000">
    <property type="pathway name" value="RAF activation"/>
</dbReference>
<dbReference type="Reactome" id="R-RNO-5673001">
    <property type="pathway name" value="RAF/MAP kinase cascade"/>
</dbReference>
<dbReference type="Reactome" id="R-RNO-70221">
    <property type="pathway name" value="Glycogen breakdown (glycogenolysis)"/>
</dbReference>
<dbReference type="Reactome" id="R-RNO-8876725">
    <property type="pathway name" value="Protein methylation"/>
</dbReference>
<dbReference type="Reactome" id="R-RNO-9009391">
    <property type="pathway name" value="Extra-nuclear estrogen signaling"/>
</dbReference>
<dbReference type="Reactome" id="R-RNO-936837">
    <property type="pathway name" value="Ion transport by P-type ATPases"/>
</dbReference>
<dbReference type="Reactome" id="R-RNO-9619229">
    <property type="pathway name" value="Activation of RAC1 downstream of NMDARs"/>
</dbReference>
<dbReference type="Reactome" id="R-RNO-9648002">
    <property type="pathway name" value="RAS processing"/>
</dbReference>
<dbReference type="Reactome" id="R-RNO-9856530">
    <property type="pathway name" value="High laminar flow shear stress activates signaling by PIEZO1 and PECAM1:CDH5:KDR in endothelial cells"/>
</dbReference>
<dbReference type="PRO" id="PR:P0DP31"/>
<dbReference type="Proteomes" id="UP000002494">
    <property type="component" value="Chromosome 6"/>
</dbReference>
<dbReference type="Bgee" id="ENSRNOG00000004060">
    <property type="expression patterns" value="Expressed in Ammon's horn and 19 other cell types or tissues"/>
</dbReference>
<dbReference type="ExpressionAtlas" id="P0DP31">
    <property type="expression patterns" value="baseline and differential"/>
</dbReference>
<dbReference type="GO" id="GO:0034704">
    <property type="term" value="C:calcium channel complex"/>
    <property type="evidence" value="ECO:0000266"/>
    <property type="project" value="RGD"/>
</dbReference>
<dbReference type="GO" id="GO:0044305">
    <property type="term" value="C:calyx of Held"/>
    <property type="evidence" value="ECO:0000266"/>
    <property type="project" value="RGD"/>
</dbReference>
<dbReference type="GO" id="GO:1902494">
    <property type="term" value="C:catalytic complex"/>
    <property type="evidence" value="ECO:0000266"/>
    <property type="project" value="RGD"/>
</dbReference>
<dbReference type="GO" id="GO:0005813">
    <property type="term" value="C:centrosome"/>
    <property type="evidence" value="ECO:0000266"/>
    <property type="project" value="RGD"/>
</dbReference>
<dbReference type="GO" id="GO:0005737">
    <property type="term" value="C:cytoplasm"/>
    <property type="evidence" value="ECO:0000266"/>
    <property type="project" value="RGD"/>
</dbReference>
<dbReference type="GO" id="GO:0030426">
    <property type="term" value="C:growth cone"/>
    <property type="evidence" value="ECO:0000314"/>
    <property type="project" value="RGD"/>
</dbReference>
<dbReference type="GO" id="GO:0005739">
    <property type="term" value="C:mitochondrion"/>
    <property type="evidence" value="ECO:0007669"/>
    <property type="project" value="GOC"/>
</dbReference>
<dbReference type="GO" id="GO:0043209">
    <property type="term" value="C:myelin sheath"/>
    <property type="evidence" value="ECO:0000314"/>
    <property type="project" value="CAFA"/>
</dbReference>
<dbReference type="GO" id="GO:0099524">
    <property type="term" value="C:postsynaptic cytosol"/>
    <property type="evidence" value="ECO:0000314"/>
    <property type="project" value="SynGO"/>
</dbReference>
<dbReference type="GO" id="GO:0099523">
    <property type="term" value="C:presynaptic cytosol"/>
    <property type="evidence" value="ECO:0000314"/>
    <property type="project" value="SynGO"/>
</dbReference>
<dbReference type="GO" id="GO:0032991">
    <property type="term" value="C:protein-containing complex"/>
    <property type="evidence" value="ECO:0000266"/>
    <property type="project" value="RGD"/>
</dbReference>
<dbReference type="GO" id="GO:0030017">
    <property type="term" value="C:sarcomere"/>
    <property type="evidence" value="ECO:0000266"/>
    <property type="project" value="RGD"/>
</dbReference>
<dbReference type="GO" id="GO:0098685">
    <property type="term" value="C:Schaffer collateral - CA1 synapse"/>
    <property type="evidence" value="ECO:0000314"/>
    <property type="project" value="SynGO"/>
</dbReference>
<dbReference type="GO" id="GO:0097225">
    <property type="term" value="C:sperm midpiece"/>
    <property type="evidence" value="ECO:0007669"/>
    <property type="project" value="Ensembl"/>
</dbReference>
<dbReference type="GO" id="GO:0005876">
    <property type="term" value="C:spindle microtubule"/>
    <property type="evidence" value="ECO:0000266"/>
    <property type="project" value="RGD"/>
</dbReference>
<dbReference type="GO" id="GO:0000922">
    <property type="term" value="C:spindle pole"/>
    <property type="evidence" value="ECO:0000266"/>
    <property type="project" value="RGD"/>
</dbReference>
<dbReference type="GO" id="GO:0031982">
    <property type="term" value="C:vesicle"/>
    <property type="evidence" value="ECO:0007669"/>
    <property type="project" value="Ensembl"/>
</dbReference>
<dbReference type="GO" id="GO:0008076">
    <property type="term" value="C:voltage-gated potassium channel complex"/>
    <property type="evidence" value="ECO:0000266"/>
    <property type="project" value="RGD"/>
</dbReference>
<dbReference type="GO" id="GO:0010856">
    <property type="term" value="F:adenylate cyclase activator activity"/>
    <property type="evidence" value="ECO:0000266"/>
    <property type="project" value="RGD"/>
</dbReference>
<dbReference type="GO" id="GO:0008179">
    <property type="term" value="F:adenylate cyclase binding"/>
    <property type="evidence" value="ECO:0000266"/>
    <property type="project" value="RGD"/>
</dbReference>
<dbReference type="GO" id="GO:0019855">
    <property type="term" value="F:calcium channel inhibitor activity"/>
    <property type="evidence" value="ECO:0000266"/>
    <property type="project" value="RGD"/>
</dbReference>
<dbReference type="GO" id="GO:0005509">
    <property type="term" value="F:calcium ion binding"/>
    <property type="evidence" value="ECO:0000314"/>
    <property type="project" value="RGD"/>
</dbReference>
<dbReference type="GO" id="GO:0048306">
    <property type="term" value="F:calcium-dependent protein binding"/>
    <property type="evidence" value="ECO:0007669"/>
    <property type="project" value="Ensembl"/>
</dbReference>
<dbReference type="GO" id="GO:0050998">
    <property type="term" value="F:nitric-oxide synthase binding"/>
    <property type="evidence" value="ECO:0000314"/>
    <property type="project" value="RGD"/>
</dbReference>
<dbReference type="GO" id="GO:0030235">
    <property type="term" value="F:nitric-oxide synthase regulator activity"/>
    <property type="evidence" value="ECO:0000314"/>
    <property type="project" value="RGD"/>
</dbReference>
<dbReference type="GO" id="GO:0019901">
    <property type="term" value="F:protein kinase binding"/>
    <property type="evidence" value="ECO:0000266"/>
    <property type="project" value="RGD"/>
</dbReference>
<dbReference type="GO" id="GO:0072542">
    <property type="term" value="F:protein phosphatase activator activity"/>
    <property type="evidence" value="ECO:0000266"/>
    <property type="project" value="RGD"/>
</dbReference>
<dbReference type="GO" id="GO:0043539">
    <property type="term" value="F:protein serine/threonine kinase activator activity"/>
    <property type="evidence" value="ECO:0000266"/>
    <property type="project" value="RGD"/>
</dbReference>
<dbReference type="GO" id="GO:0031432">
    <property type="term" value="F:titin binding"/>
    <property type="evidence" value="ECO:0000266"/>
    <property type="project" value="RGD"/>
</dbReference>
<dbReference type="GO" id="GO:0044325">
    <property type="term" value="F:transmembrane transporter binding"/>
    <property type="evidence" value="ECO:0000314"/>
    <property type="project" value="RGD"/>
</dbReference>
<dbReference type="GO" id="GO:0016240">
    <property type="term" value="P:autophagosome membrane docking"/>
    <property type="evidence" value="ECO:0000266"/>
    <property type="project" value="RGD"/>
</dbReference>
<dbReference type="GO" id="GO:0097720">
    <property type="term" value="P:calcineurin-mediated signaling"/>
    <property type="evidence" value="ECO:0000266"/>
    <property type="project" value="RGD"/>
</dbReference>
<dbReference type="GO" id="GO:0035458">
    <property type="term" value="P:cellular response to interferon-beta"/>
    <property type="evidence" value="ECO:0000266"/>
    <property type="project" value="RGD"/>
</dbReference>
<dbReference type="GO" id="GO:0071346">
    <property type="term" value="P:cellular response to type II interferon"/>
    <property type="evidence" value="ECO:0000266"/>
    <property type="project" value="RGD"/>
</dbReference>
<dbReference type="GO" id="GO:0005513">
    <property type="term" value="P:detection of calcium ion"/>
    <property type="evidence" value="ECO:0000266"/>
    <property type="project" value="RGD"/>
</dbReference>
<dbReference type="GO" id="GO:0090150">
    <property type="term" value="P:establishment of protein localization to membrane"/>
    <property type="evidence" value="ECO:0000315"/>
    <property type="project" value="CAFA"/>
</dbReference>
<dbReference type="GO" id="GO:0090151">
    <property type="term" value="P:establishment of protein localization to mitochondrial membrane"/>
    <property type="evidence" value="ECO:0000315"/>
    <property type="project" value="CAFA"/>
</dbReference>
<dbReference type="GO" id="GO:0000086">
    <property type="term" value="P:G2/M transition of mitotic cell cycle"/>
    <property type="evidence" value="ECO:0000266"/>
    <property type="project" value="RGD"/>
</dbReference>
<dbReference type="GO" id="GO:1990456">
    <property type="term" value="P:mitochondrion-endoplasmic reticulum membrane tethering"/>
    <property type="evidence" value="ECO:0000266"/>
    <property type="project" value="RGD"/>
</dbReference>
<dbReference type="GO" id="GO:1905913">
    <property type="term" value="P:negative regulation of calcium ion export across plasma membrane"/>
    <property type="evidence" value="ECO:0007669"/>
    <property type="project" value="Ensembl"/>
</dbReference>
<dbReference type="GO" id="GO:1901842">
    <property type="term" value="P:negative regulation of high voltage-gated calcium channel activity"/>
    <property type="evidence" value="ECO:0000250"/>
    <property type="project" value="UniProtKB"/>
</dbReference>
<dbReference type="GO" id="GO:0140056">
    <property type="term" value="P:organelle localization by membrane tethering"/>
    <property type="evidence" value="ECO:0000266"/>
    <property type="project" value="RGD"/>
</dbReference>
<dbReference type="GO" id="GO:0046427">
    <property type="term" value="P:positive regulation of receptor signaling pathway via JAK-STAT"/>
    <property type="evidence" value="ECO:0000266"/>
    <property type="project" value="RGD"/>
</dbReference>
<dbReference type="GO" id="GO:0140238">
    <property type="term" value="P:presynaptic endocytosis"/>
    <property type="evidence" value="ECO:0000266"/>
    <property type="project" value="RGD"/>
</dbReference>
<dbReference type="GO" id="GO:0050848">
    <property type="term" value="P:regulation of calcium-mediated signaling"/>
    <property type="evidence" value="ECO:0007669"/>
    <property type="project" value="Ensembl"/>
</dbReference>
<dbReference type="GO" id="GO:0098901">
    <property type="term" value="P:regulation of cardiac muscle cell action potential"/>
    <property type="evidence" value="ECO:0000250"/>
    <property type="project" value="UniProtKB"/>
</dbReference>
<dbReference type="GO" id="GO:0055117">
    <property type="term" value="P:regulation of cardiac muscle contraction"/>
    <property type="evidence" value="ECO:0000266"/>
    <property type="project" value="RGD"/>
</dbReference>
<dbReference type="GO" id="GO:0032465">
    <property type="term" value="P:regulation of cytokinesis"/>
    <property type="evidence" value="ECO:0000266"/>
    <property type="project" value="RGD"/>
</dbReference>
<dbReference type="GO" id="GO:0002027">
    <property type="term" value="P:regulation of heart rate"/>
    <property type="evidence" value="ECO:0000266"/>
    <property type="project" value="RGD"/>
</dbReference>
<dbReference type="GO" id="GO:0010880">
    <property type="term" value="P:regulation of release of sequestered calcium ion into cytosol by sarcoplasmic reticulum"/>
    <property type="evidence" value="ECO:0000266"/>
    <property type="project" value="RGD"/>
</dbReference>
<dbReference type="GO" id="GO:1900242">
    <property type="term" value="P:regulation of synaptic vesicle endocytosis"/>
    <property type="evidence" value="ECO:0000315"/>
    <property type="project" value="CAFA"/>
</dbReference>
<dbReference type="GO" id="GO:2000300">
    <property type="term" value="P:regulation of synaptic vesicle exocytosis"/>
    <property type="evidence" value="ECO:0000315"/>
    <property type="project" value="CAFA"/>
</dbReference>
<dbReference type="GO" id="GO:0001975">
    <property type="term" value="P:response to amphetamine"/>
    <property type="evidence" value="ECO:0000270"/>
    <property type="project" value="RGD"/>
</dbReference>
<dbReference type="GO" id="GO:0051592">
    <property type="term" value="P:response to calcium ion"/>
    <property type="evidence" value="ECO:0000266"/>
    <property type="project" value="RGD"/>
</dbReference>
<dbReference type="CDD" id="cd00051">
    <property type="entry name" value="EFh"/>
    <property type="match status" value="2"/>
</dbReference>
<dbReference type="FunFam" id="1.10.238.10:FF:000527">
    <property type="entry name" value="Calmodulin-3"/>
    <property type="match status" value="1"/>
</dbReference>
<dbReference type="Gene3D" id="1.10.238.10">
    <property type="entry name" value="EF-hand"/>
    <property type="match status" value="3"/>
</dbReference>
<dbReference type="InterPro" id="IPR050230">
    <property type="entry name" value="CALM/Myosin/TropC-like"/>
</dbReference>
<dbReference type="InterPro" id="IPR011992">
    <property type="entry name" value="EF-hand-dom_pair"/>
</dbReference>
<dbReference type="InterPro" id="IPR018247">
    <property type="entry name" value="EF_Hand_1_Ca_BS"/>
</dbReference>
<dbReference type="InterPro" id="IPR002048">
    <property type="entry name" value="EF_hand_dom"/>
</dbReference>
<dbReference type="PANTHER" id="PTHR23048:SF0">
    <property type="entry name" value="CALMODULIN LIKE 3"/>
    <property type="match status" value="1"/>
</dbReference>
<dbReference type="PANTHER" id="PTHR23048">
    <property type="entry name" value="MYOSIN LIGHT CHAIN 1, 3"/>
    <property type="match status" value="1"/>
</dbReference>
<dbReference type="Pfam" id="PF13499">
    <property type="entry name" value="EF-hand_7"/>
    <property type="match status" value="2"/>
</dbReference>
<dbReference type="PRINTS" id="PR00450">
    <property type="entry name" value="RECOVERIN"/>
</dbReference>
<dbReference type="SMART" id="SM00054">
    <property type="entry name" value="EFh"/>
    <property type="match status" value="4"/>
</dbReference>
<dbReference type="SUPFAM" id="SSF47473">
    <property type="entry name" value="EF-hand"/>
    <property type="match status" value="1"/>
</dbReference>
<dbReference type="PROSITE" id="PS00018">
    <property type="entry name" value="EF_HAND_1"/>
    <property type="match status" value="4"/>
</dbReference>
<dbReference type="PROSITE" id="PS50222">
    <property type="entry name" value="EF_HAND_2"/>
    <property type="match status" value="4"/>
</dbReference>
<protein>
    <recommendedName>
        <fullName evidence="2">Calmodulin-3</fullName>
    </recommendedName>
</protein>
<sequence>MADQLTEEQIAEFKEAFSLFDKDGDGTITTKELGTVMRSLGQNPTEAELQDMINEVDADGNGTIDFPEFLTMMARKMKDTDSEEEIREAFRVFDKDGNGYISAAELRHVMTNLGEKLTDEEVDEMIREADIDGDGQVNYEEFVQMMTAK</sequence>
<reference key="1">
    <citation type="journal article" date="1987" name="DNA">
        <title>Rat calmodulin cDNA.</title>
        <authorList>
            <person name="Sherbany A.A."/>
            <person name="Parent A.S."/>
            <person name="Brosius J."/>
        </authorList>
    </citation>
    <scope>NUCLEOTIDE SEQUENCE [MRNA]</scope>
    <source>
        <tissue>Brain</tissue>
    </source>
</reference>
<reference key="2">
    <citation type="journal article" date="1989" name="J. Mol. Biol.">
        <title>Structural organization of multiple rat calmodulin genes.</title>
        <authorList>
            <person name="Nojima H."/>
        </authorList>
    </citation>
    <scope>NUCLEOTIDE SEQUENCE [GENOMIC DNA]</scope>
    <scope>NUCLEOTIDE SEQUENCE [MRNA]</scope>
    <source>
        <strain>SHR</strain>
    </source>
</reference>
<reference key="3">
    <citation type="journal article" date="2004" name="Genome Res.">
        <title>The status, quality, and expansion of the NIH full-length cDNA project: the Mammalian Gene Collection (MGC).</title>
        <authorList>
            <consortium name="The MGC Project Team"/>
        </authorList>
    </citation>
    <scope>NUCLEOTIDE SEQUENCE [LARGE SCALE MRNA]</scope>
    <source>
        <tissue>Pituitary</tissue>
    </source>
</reference>
<reference key="4">
    <citation type="journal article" date="1978" name="J. Biol. Chem.">
        <title>Sequence homology of the Ca2+-dependent regulator of cyclic nucleotide phosphodiesterase from rat testis with other Ca2+-binding proteins.</title>
        <authorList>
            <person name="Dedman J.R."/>
            <person name="Jackson R.L."/>
            <person name="Schreiber W.E."/>
            <person name="Means A.R."/>
        </authorList>
    </citation>
    <scope>PROTEIN SEQUENCE OF 2-149</scope>
    <scope>ACETYLATION AT ALA-2</scope>
    <scope>METHYLATION AT LYS-116</scope>
    <source>
        <tissue>Testis</tissue>
    </source>
</reference>
<reference key="5">
    <citation type="submission" date="2007-09" db="UniProtKB">
        <authorList>
            <person name="Lubec G."/>
            <person name="Chen W.-Q."/>
            <person name="Kang S.U."/>
            <person name="Lubec S."/>
        </authorList>
    </citation>
    <scope>PROTEIN SEQUENCE OF 15-31; 79-87 AND 92-107</scope>
    <scope>IDENTIFICATION BY MASS SPECTROMETRY</scope>
    <source>
        <strain>Sprague-Dawley</strain>
        <tissue>Brain</tissue>
        <tissue>Hippocampus</tissue>
    </source>
</reference>
<reference key="6">
    <citation type="journal article" date="1996" name="J. Biol. Chem.">
        <title>Calmodulin binds to specific sequences in the cytoplasmic domain of C-CAM and down-regulates C-CAM self-association.</title>
        <authorList>
            <person name="Edlund M."/>
            <person name="Blikstad I."/>
            <person name="Obrink B."/>
        </authorList>
    </citation>
    <scope>INTERACTION WITH CEACAM1</scope>
</reference>
<reference key="7">
    <citation type="journal article" date="2002" name="Arch. Biochem. Biophys.">
        <title>Phosphorylation of calmodulin by Ca2+/calmodulin-dependent protein kinase IV.</title>
        <authorList>
            <person name="Ishida A."/>
            <person name="Kameshita I."/>
            <person name="Okuno S."/>
            <person name="Kitani T."/>
            <person name="Fujisawa H."/>
        </authorList>
    </citation>
    <scope>PHOSPHORYLATION AT THR-45</scope>
</reference>
<reference key="8">
    <citation type="journal article" date="2007" name="Circulation">
        <title>Rad GTPase deficiency leads to cardiac hypertrophy.</title>
        <authorList>
            <person name="Chang L."/>
            <person name="Zhang J."/>
            <person name="Tseng Y.-H."/>
            <person name="Xie C.-Q."/>
            <person name="Ilany J."/>
            <person name="Bruning J.C."/>
            <person name="Sun Z."/>
            <person name="Zhu X."/>
            <person name="Cui T."/>
            <person name="Youker K.A."/>
            <person name="Yang Q."/>
            <person name="Day S.M."/>
            <person name="Kahn C.R."/>
            <person name="Chen Y.E."/>
        </authorList>
    </citation>
    <scope>INTERACTION WITH RRAD</scope>
</reference>
<reference key="9">
    <citation type="submission" date="2007-02" db="UniProtKB">
        <authorList>
            <person name="Lubec G."/>
            <person name="Chen W.-Q."/>
        </authorList>
    </citation>
    <scope>ACETYLATION AT ALA-2</scope>
    <scope>IDENTIFICATION BY MASS SPECTROMETRY</scope>
</reference>
<reference key="10">
    <citation type="journal article" date="2012" name="Nat. Commun.">
        <title>Quantitative maps of protein phosphorylation sites across 14 different rat organs and tissues.</title>
        <authorList>
            <person name="Lundby A."/>
            <person name="Secher A."/>
            <person name="Lage K."/>
            <person name="Nordsborg N.B."/>
            <person name="Dmytriyev A."/>
            <person name="Lundby C."/>
            <person name="Olsen J.V."/>
        </authorList>
    </citation>
    <scope>PHOSPHORYLATION [LARGE SCALE ANALYSIS] AT TYR-100 AND SER-102</scope>
    <scope>IDENTIFICATION BY MASS SPECTROMETRY [LARGE SCALE ANALYSIS]</scope>
</reference>
<organism>
    <name type="scientific">Rattus norvegicus</name>
    <name type="common">Rat</name>
    <dbReference type="NCBI Taxonomy" id="10116"/>
    <lineage>
        <taxon>Eukaryota</taxon>
        <taxon>Metazoa</taxon>
        <taxon>Chordata</taxon>
        <taxon>Craniata</taxon>
        <taxon>Vertebrata</taxon>
        <taxon>Euteleostomi</taxon>
        <taxon>Mammalia</taxon>
        <taxon>Eutheria</taxon>
        <taxon>Euarchontoglires</taxon>
        <taxon>Glires</taxon>
        <taxon>Rodentia</taxon>
        <taxon>Myomorpha</taxon>
        <taxon>Muroidea</taxon>
        <taxon>Muridae</taxon>
        <taxon>Murinae</taxon>
        <taxon>Rattus</taxon>
    </lineage>
</organism>
<keyword id="KW-0002">3D-structure</keyword>
<keyword id="KW-0007">Acetylation</keyword>
<keyword id="KW-0106">Calcium</keyword>
<keyword id="KW-0963">Cytoplasm</keyword>
<keyword id="KW-0206">Cytoskeleton</keyword>
<keyword id="KW-0903">Direct protein sequencing</keyword>
<keyword id="KW-1017">Isopeptide bond</keyword>
<keyword id="KW-0479">Metal-binding</keyword>
<keyword id="KW-0488">Methylation</keyword>
<keyword id="KW-0597">Phosphoprotein</keyword>
<keyword id="KW-1185">Reference proteome</keyword>
<keyword id="KW-0677">Repeat</keyword>
<keyword id="KW-0832">Ubl conjugation</keyword>
<accession>P0DP31</accession>
<accession>P02593</accession>
<accession>P62161</accession>
<accession>P70667</accession>
<accession>P99014</accession>
<accession>Q61379</accession>
<accession>Q61380</accession>
<comment type="function">
    <text evidence="2">Calmodulin acts as part of a calcium signal transduction pathway by mediating the control of a large number of enzymes, ion channels, aquaporins and other proteins through calcium-binding. Calcium-binding is required for the activation of calmodulin. Among the enzymes to be stimulated by the calmodulin-calcium complex are a number of protein kinases, such as myosin light-chain kinases and calmodulin-dependent protein kinase type II (CaMK2), and phosphatases. Together with CCP110 and centrin, is involved in a genetic pathway that regulates the centrosome cycle and progression through cytokinesis.</text>
</comment>
<comment type="subunit">
    <text evidence="2 3 4 5 6 9 11">Interacts with CEP97, CCP110, TTN/titin and SRY (By similarity). Interacts with MYO5A and RRAD (PubMed:18056528). Interacts with USP6; the interaction is calcium dependent (By similarity). Interacts with CDK5RAP2 (By similarity). Interacts with SCN5A (By similarity). Interacts with RYR1 (By similarity). Interacts with FCHO1 (By similarity). Interacts with MIP in a 1:2 stoichiometry; the interaction with the cytoplasmic domains from two MIP subunits promotes MIP water channel closure (By similarity). Interacts with ORAI1; this may play a role in the regulation of ORAI1-mediated calcium transport (By similarity). Interacts with SYT7 (By similarity). Interacts with MYO10 and MYO1C (By similarity). Interacts with CEACAM1 (via cytoplasmic domain); this interaction is in a calcium dependent manner and reduces homophilic cell adhesion through dissociation of dimer (PubMed:8576129). Interacts with RYR2; regulates RYR2 calcium-release channel activity (By similarity). Interacts with PCP4; regulates calmodulin calcium-binding (By similarity). Interacts with the heterotetrameric KCNQ2 and KCNQ3 channel; the interaction is calcium-independent, constitutive and participates in the proper assembly of a functional heterotetrameric M channel (By similarity). Component of the SIFI complex (By similarity).</text>
</comment>
<comment type="subcellular location">
    <subcellularLocation>
        <location>Cytoplasm</location>
        <location>Cytoskeleton</location>
        <location>Spindle</location>
    </subcellularLocation>
    <subcellularLocation>
        <location>Cytoplasm</location>
        <location>Cytoskeleton</location>
        <location>Spindle pole</location>
    </subcellularLocation>
    <text evidence="1">Distributed throughout the cell during interphase, but during mitosis becomes dramatically localized to the spindle poles and the spindle microtubules.</text>
</comment>
<comment type="PTM">
    <text evidence="1">Ubiquitination results in a strongly decreased activity.</text>
</comment>
<comment type="PTM">
    <text evidence="8">Phosphorylation results in a decreased activity.</text>
</comment>
<comment type="miscellaneous">
    <text evidence="2">This protein has four functional calcium-binding sites.</text>
</comment>
<comment type="similarity">
    <text evidence="14">Belongs to the calmodulin family.</text>
</comment>
<name>CALM3_RAT</name>
<evidence type="ECO:0000250" key="1"/>
<evidence type="ECO:0000250" key="2">
    <source>
        <dbReference type="UniProtKB" id="P0DP25"/>
    </source>
</evidence>
<evidence type="ECO:0000250" key="3">
    <source>
        <dbReference type="UniProtKB" id="P0DP29"/>
    </source>
</evidence>
<evidence type="ECO:0000250" key="4">
    <source>
        <dbReference type="UniProtKB" id="P62157"/>
    </source>
</evidence>
<evidence type="ECO:0000250" key="5">
    <source>
        <dbReference type="UniProtKB" id="P62158"/>
    </source>
</evidence>
<evidence type="ECO:0000250" key="6">
    <source>
        <dbReference type="UniProtKB" id="P62204"/>
    </source>
</evidence>
<evidence type="ECO:0000255" key="7">
    <source>
        <dbReference type="PROSITE-ProRule" id="PRU00448"/>
    </source>
</evidence>
<evidence type="ECO:0000269" key="8">
    <source>
    </source>
</evidence>
<evidence type="ECO:0000269" key="9">
    <source>
    </source>
</evidence>
<evidence type="ECO:0000269" key="10">
    <source>
    </source>
</evidence>
<evidence type="ECO:0000269" key="11">
    <source>
    </source>
</evidence>
<evidence type="ECO:0000269" key="12">
    <source ref="9"/>
</evidence>
<evidence type="ECO:0000303" key="13">
    <source>
    </source>
</evidence>
<evidence type="ECO:0000305" key="14"/>
<evidence type="ECO:0000312" key="15">
    <source>
        <dbReference type="RGD" id="2259"/>
    </source>
</evidence>
<evidence type="ECO:0007744" key="16">
    <source>
    </source>
</evidence>
<evidence type="ECO:0007829" key="17">
    <source>
        <dbReference type="PDB" id="4I2Y"/>
    </source>
</evidence>
<proteinExistence type="evidence at protein level"/>
<feature type="initiator methionine" description="Removed" evidence="10 12">
    <location>
        <position position="1"/>
    </location>
</feature>
<feature type="chain" id="PRO_0000439940" description="Calmodulin-3">
    <location>
        <begin position="2"/>
        <end position="149"/>
    </location>
</feature>
<feature type="domain" description="EF-hand 1" evidence="7">
    <location>
        <begin position="8"/>
        <end position="43"/>
    </location>
</feature>
<feature type="domain" description="EF-hand 2" evidence="7">
    <location>
        <begin position="44"/>
        <end position="79"/>
    </location>
</feature>
<feature type="domain" description="EF-hand 3" evidence="7">
    <location>
        <begin position="81"/>
        <end position="116"/>
    </location>
</feature>
<feature type="domain" description="EF-hand 4" evidence="7">
    <location>
        <begin position="117"/>
        <end position="149"/>
    </location>
</feature>
<feature type="region of interest" description="Necessary and sufficient for interaction with PCP4" evidence="2">
    <location>
        <begin position="77"/>
        <end position="149"/>
    </location>
</feature>
<feature type="binding site" evidence="7">
    <location>
        <position position="21"/>
    </location>
    <ligand>
        <name>Ca(2+)</name>
        <dbReference type="ChEBI" id="CHEBI:29108"/>
        <label>1</label>
    </ligand>
</feature>
<feature type="binding site" evidence="7">
    <location>
        <position position="23"/>
    </location>
    <ligand>
        <name>Ca(2+)</name>
        <dbReference type="ChEBI" id="CHEBI:29108"/>
        <label>1</label>
    </ligand>
</feature>
<feature type="binding site" evidence="7">
    <location>
        <position position="25"/>
    </location>
    <ligand>
        <name>Ca(2+)</name>
        <dbReference type="ChEBI" id="CHEBI:29108"/>
        <label>1</label>
    </ligand>
</feature>
<feature type="binding site" evidence="7">
    <location>
        <position position="27"/>
    </location>
    <ligand>
        <name>Ca(2+)</name>
        <dbReference type="ChEBI" id="CHEBI:29108"/>
        <label>1</label>
    </ligand>
</feature>
<feature type="binding site" evidence="7">
    <location>
        <position position="32"/>
    </location>
    <ligand>
        <name>Ca(2+)</name>
        <dbReference type="ChEBI" id="CHEBI:29108"/>
        <label>1</label>
    </ligand>
</feature>
<feature type="binding site" evidence="7">
    <location>
        <position position="57"/>
    </location>
    <ligand>
        <name>Ca(2+)</name>
        <dbReference type="ChEBI" id="CHEBI:29108"/>
        <label>2</label>
    </ligand>
</feature>
<feature type="binding site" evidence="7">
    <location>
        <position position="59"/>
    </location>
    <ligand>
        <name>Ca(2+)</name>
        <dbReference type="ChEBI" id="CHEBI:29108"/>
        <label>2</label>
    </ligand>
</feature>
<feature type="binding site" evidence="7">
    <location>
        <position position="61"/>
    </location>
    <ligand>
        <name>Ca(2+)</name>
        <dbReference type="ChEBI" id="CHEBI:29108"/>
        <label>2</label>
    </ligand>
</feature>
<feature type="binding site" evidence="7">
    <location>
        <position position="63"/>
    </location>
    <ligand>
        <name>Ca(2+)</name>
        <dbReference type="ChEBI" id="CHEBI:29108"/>
        <label>2</label>
    </ligand>
</feature>
<feature type="binding site" evidence="7">
    <location>
        <position position="68"/>
    </location>
    <ligand>
        <name>Ca(2+)</name>
        <dbReference type="ChEBI" id="CHEBI:29108"/>
        <label>2</label>
    </ligand>
</feature>
<feature type="binding site" evidence="7">
    <location>
        <position position="94"/>
    </location>
    <ligand>
        <name>Ca(2+)</name>
        <dbReference type="ChEBI" id="CHEBI:29108"/>
        <label>3</label>
    </ligand>
</feature>
<feature type="binding site" evidence="7">
    <location>
        <position position="96"/>
    </location>
    <ligand>
        <name>Ca(2+)</name>
        <dbReference type="ChEBI" id="CHEBI:29108"/>
        <label>3</label>
    </ligand>
</feature>
<feature type="binding site" evidence="7">
    <location>
        <position position="98"/>
    </location>
    <ligand>
        <name>Ca(2+)</name>
        <dbReference type="ChEBI" id="CHEBI:29108"/>
        <label>3</label>
    </ligand>
</feature>
<feature type="binding site" evidence="7">
    <location>
        <position position="100"/>
    </location>
    <ligand>
        <name>Ca(2+)</name>
        <dbReference type="ChEBI" id="CHEBI:29108"/>
        <label>3</label>
    </ligand>
</feature>
<feature type="binding site" evidence="7">
    <location>
        <position position="105"/>
    </location>
    <ligand>
        <name>Ca(2+)</name>
        <dbReference type="ChEBI" id="CHEBI:29108"/>
        <label>3</label>
    </ligand>
</feature>
<feature type="binding site" evidence="7">
    <location>
        <position position="130"/>
    </location>
    <ligand>
        <name>Ca(2+)</name>
        <dbReference type="ChEBI" id="CHEBI:29108"/>
        <label>4</label>
    </ligand>
</feature>
<feature type="binding site" evidence="7">
    <location>
        <position position="132"/>
    </location>
    <ligand>
        <name>Ca(2+)</name>
        <dbReference type="ChEBI" id="CHEBI:29108"/>
        <label>4</label>
    </ligand>
</feature>
<feature type="binding site" evidence="7">
    <location>
        <position position="134"/>
    </location>
    <ligand>
        <name>Ca(2+)</name>
        <dbReference type="ChEBI" id="CHEBI:29108"/>
        <label>4</label>
    </ligand>
</feature>
<feature type="binding site" evidence="7">
    <location>
        <position position="136"/>
    </location>
    <ligand>
        <name>Ca(2+)</name>
        <dbReference type="ChEBI" id="CHEBI:29108"/>
        <label>4</label>
    </ligand>
</feature>
<feature type="binding site" evidence="7">
    <location>
        <position position="141"/>
    </location>
    <ligand>
        <name>Ca(2+)</name>
        <dbReference type="ChEBI" id="CHEBI:29108"/>
        <label>4</label>
    </ligand>
</feature>
<feature type="modified residue" description="N-acetylalanine" evidence="10 12">
    <location>
        <position position="2"/>
    </location>
</feature>
<feature type="modified residue" description="N6-acetyllysine; alternate" evidence="2">
    <location>
        <position position="22"/>
    </location>
</feature>
<feature type="modified residue" description="Phosphothreonine; by CaMK4" evidence="8">
    <location>
        <position position="45"/>
    </location>
</feature>
<feature type="modified residue" description="Phosphoserine" evidence="2">
    <location>
        <position position="82"/>
    </location>
</feature>
<feature type="modified residue" description="N6-acetyllysine" evidence="2">
    <location>
        <position position="95"/>
    </location>
</feature>
<feature type="modified residue" description="Phosphotyrosine" evidence="16">
    <location>
        <position position="100"/>
    </location>
</feature>
<feature type="modified residue" description="Phosphoserine" evidence="16">
    <location>
        <position position="102"/>
    </location>
</feature>
<feature type="modified residue" description="Phosphothreonine" evidence="2">
    <location>
        <position position="111"/>
    </location>
</feature>
<feature type="modified residue" description="N6,N6,N6-trimethyllysine; alternate" evidence="10">
    <location>
        <position position="116"/>
    </location>
</feature>
<feature type="modified residue" description="N6-methyllysine; alternate" evidence="2">
    <location>
        <position position="116"/>
    </location>
</feature>
<feature type="modified residue" description="Phosphotyrosine" evidence="2">
    <location>
        <position position="139"/>
    </location>
</feature>
<feature type="cross-link" description="Glycyl lysine isopeptide (Lys-Gly) (interchain with G-Cter in SUMO2); alternate" evidence="2">
    <location>
        <position position="22"/>
    </location>
</feature>
<feature type="cross-link" description="Glycyl lysine isopeptide (Lys-Gly) (interchain with G-Cter in ubiquitin); alternate" evidence="4">
    <location>
        <position position="22"/>
    </location>
</feature>
<feature type="strand" evidence="17">
    <location>
        <begin position="25"/>
        <end position="28"/>
    </location>
</feature>
<feature type="helix" evidence="17">
    <location>
        <begin position="30"/>
        <end position="39"/>
    </location>
</feature>
<feature type="helix" evidence="17">
    <location>
        <begin position="46"/>
        <end position="56"/>
    </location>
</feature>
<feature type="helix" evidence="17">
    <location>
        <begin position="66"/>
        <end position="73"/>
    </location>
</feature>
<feature type="helix" evidence="17">
    <location>
        <begin position="79"/>
        <end position="93"/>
    </location>
</feature>
<feature type="strand" evidence="17">
    <location>
        <begin position="98"/>
        <end position="101"/>
    </location>
</feature>
<feature type="helix" evidence="17">
    <location>
        <begin position="103"/>
        <end position="113"/>
    </location>
</feature>
<feature type="helix" evidence="17">
    <location>
        <begin position="119"/>
        <end position="129"/>
    </location>
</feature>
<feature type="strand" evidence="17">
    <location>
        <begin position="134"/>
        <end position="138"/>
    </location>
</feature>
<feature type="helix" evidence="17">
    <location>
        <begin position="139"/>
        <end position="145"/>
    </location>
</feature>
<gene>
    <name evidence="15" type="primary">Calm3</name>
    <name type="synonym">Cam3</name>
    <name type="synonym">Camc</name>
    <name evidence="13" type="synonym">CaMIII</name>
</gene>